<organism>
    <name type="scientific">Homo sapiens</name>
    <name type="common">Human</name>
    <dbReference type="NCBI Taxonomy" id="9606"/>
    <lineage>
        <taxon>Eukaryota</taxon>
        <taxon>Metazoa</taxon>
        <taxon>Chordata</taxon>
        <taxon>Craniata</taxon>
        <taxon>Vertebrata</taxon>
        <taxon>Euteleostomi</taxon>
        <taxon>Mammalia</taxon>
        <taxon>Eutheria</taxon>
        <taxon>Euarchontoglires</taxon>
        <taxon>Primates</taxon>
        <taxon>Haplorrhini</taxon>
        <taxon>Catarrhini</taxon>
        <taxon>Hominidae</taxon>
        <taxon>Homo</taxon>
    </lineage>
</organism>
<gene>
    <name type="primary">BRSK1</name>
    <name type="synonym">KIAA1811</name>
    <name type="synonym">SAD1</name>
    <name type="synonym">SADB</name>
</gene>
<evidence type="ECO:0000250" key="1"/>
<evidence type="ECO:0000250" key="2">
    <source>
        <dbReference type="UniProtKB" id="B2DD29"/>
    </source>
</evidence>
<evidence type="ECO:0000250" key="3">
    <source>
        <dbReference type="UniProtKB" id="Q5RJI5"/>
    </source>
</evidence>
<evidence type="ECO:0000255" key="4">
    <source>
        <dbReference type="PROSITE-ProRule" id="PRU00159"/>
    </source>
</evidence>
<evidence type="ECO:0000255" key="5">
    <source>
        <dbReference type="PROSITE-ProRule" id="PRU00212"/>
    </source>
</evidence>
<evidence type="ECO:0000255" key="6">
    <source>
        <dbReference type="PROSITE-ProRule" id="PRU10027"/>
    </source>
</evidence>
<evidence type="ECO:0000256" key="7">
    <source>
        <dbReference type="SAM" id="MobiDB-lite"/>
    </source>
</evidence>
<evidence type="ECO:0000269" key="8">
    <source>
    </source>
</evidence>
<evidence type="ECO:0000269" key="9">
    <source>
    </source>
</evidence>
<evidence type="ECO:0000269" key="10">
    <source>
    </source>
</evidence>
<evidence type="ECO:0000269" key="11">
    <source>
    </source>
</evidence>
<evidence type="ECO:0000269" key="12">
    <source>
    </source>
</evidence>
<evidence type="ECO:0000269" key="13">
    <source>
    </source>
</evidence>
<evidence type="ECO:0000269" key="14">
    <source>
    </source>
</evidence>
<evidence type="ECO:0000303" key="15">
    <source>
    </source>
</evidence>
<evidence type="ECO:0000303" key="16">
    <source>
    </source>
</evidence>
<evidence type="ECO:0000303" key="17">
    <source ref="5"/>
</evidence>
<evidence type="ECO:0000305" key="18"/>
<evidence type="ECO:0007744" key="19">
    <source>
    </source>
</evidence>
<comment type="function">
    <text evidence="8 9 13 14">Serine/threonine-protein kinase that plays a key role in polarization of neurons and centrosome duplication. Phosphorylates CDC25B, CDC25C, MAPT/TAU, RIMS1, TUBG1, TUBG2 and WEE1. Following phosphorylation and activation by STK11/LKB1, acts as a key regulator of polarization of cortical neurons, probably by mediating phosphorylation of microtubule-associated proteins such as MAPT/TAU at 'Thr-529' and 'Ser-579'. Also regulates neuron polarization by mediating phosphorylation of WEE1 at 'Ser-642' in postmitotic neurons, leading to down-regulate WEE1 activity in polarized neurons. In neurons, localizes to synaptic vesicles and plays a role in neurotransmitter release, possibly by phosphorylating RIMS1. Also acts as a positive regulator of centrosome duplication by mediating phosphorylation of gamma-tubulin (TUBG1 and TUBG2) at 'Ser-131', leading to translocation of gamma-tubulin and its associated proteins to the centrosome. Involved in the UV-induced DNA damage checkpoint response, probably by inhibiting CDK1 activity through phosphorylation and activation of WEE1, and inhibition of CDC25B and CDC25C.</text>
</comment>
<comment type="catalytic activity">
    <reaction evidence="14">
        <text>L-seryl-[protein] + ATP = O-phospho-L-seryl-[protein] + ADP + H(+)</text>
        <dbReference type="Rhea" id="RHEA:17989"/>
        <dbReference type="Rhea" id="RHEA-COMP:9863"/>
        <dbReference type="Rhea" id="RHEA-COMP:11604"/>
        <dbReference type="ChEBI" id="CHEBI:15378"/>
        <dbReference type="ChEBI" id="CHEBI:29999"/>
        <dbReference type="ChEBI" id="CHEBI:30616"/>
        <dbReference type="ChEBI" id="CHEBI:83421"/>
        <dbReference type="ChEBI" id="CHEBI:456216"/>
        <dbReference type="EC" id="2.7.11.1"/>
    </reaction>
</comment>
<comment type="catalytic activity">
    <reaction evidence="14">
        <text>L-threonyl-[protein] + ATP = O-phospho-L-threonyl-[protein] + ADP + H(+)</text>
        <dbReference type="Rhea" id="RHEA:46608"/>
        <dbReference type="Rhea" id="RHEA-COMP:11060"/>
        <dbReference type="Rhea" id="RHEA-COMP:11605"/>
        <dbReference type="ChEBI" id="CHEBI:15378"/>
        <dbReference type="ChEBI" id="CHEBI:30013"/>
        <dbReference type="ChEBI" id="CHEBI:30616"/>
        <dbReference type="ChEBI" id="CHEBI:61977"/>
        <dbReference type="ChEBI" id="CHEBI:456216"/>
        <dbReference type="EC" id="2.7.11.1"/>
    </reaction>
</comment>
<comment type="catalytic activity">
    <reaction evidence="14">
        <text>L-seryl-[tau protein] + ATP = O-phospho-L-seryl-[tau protein] + ADP + H(+)</text>
        <dbReference type="Rhea" id="RHEA:12801"/>
        <dbReference type="Rhea" id="RHEA-COMP:13701"/>
        <dbReference type="Rhea" id="RHEA-COMP:13702"/>
        <dbReference type="ChEBI" id="CHEBI:15378"/>
        <dbReference type="ChEBI" id="CHEBI:29999"/>
        <dbReference type="ChEBI" id="CHEBI:30616"/>
        <dbReference type="ChEBI" id="CHEBI:83421"/>
        <dbReference type="ChEBI" id="CHEBI:456216"/>
        <dbReference type="EC" id="2.7.11.26"/>
    </reaction>
</comment>
<comment type="catalytic activity">
    <reaction evidence="14">
        <text>L-threonyl-[tau protein] + ATP = O-phospho-L-threonyl-[tau protein] + ADP + H(+)</text>
        <dbReference type="Rhea" id="RHEA:53904"/>
        <dbReference type="Rhea" id="RHEA-COMP:13703"/>
        <dbReference type="Rhea" id="RHEA-COMP:13704"/>
        <dbReference type="ChEBI" id="CHEBI:15378"/>
        <dbReference type="ChEBI" id="CHEBI:30013"/>
        <dbReference type="ChEBI" id="CHEBI:30616"/>
        <dbReference type="ChEBI" id="CHEBI:61977"/>
        <dbReference type="ChEBI" id="CHEBI:456216"/>
        <dbReference type="EC" id="2.7.11.26"/>
    </reaction>
</comment>
<comment type="cofactor">
    <cofactor evidence="1">
        <name>Mg(2+)</name>
        <dbReference type="ChEBI" id="CHEBI:18420"/>
    </cofactor>
</comment>
<comment type="activity regulation">
    <text evidence="8">Activated by phosphorylation on Thr-189 by STK11/LKB1.</text>
</comment>
<comment type="subcellular location">
    <subcellularLocation>
        <location evidence="9">Cytoplasm</location>
    </subcellularLocation>
    <subcellularLocation>
        <location evidence="9">Nucleus</location>
    </subcellularLocation>
    <subcellularLocation>
        <location evidence="1">Cytoplasm</location>
        <location evidence="1">Cytoskeleton</location>
        <location evidence="1">Microtubule organizing center</location>
        <location evidence="1">Centrosome</location>
    </subcellularLocation>
    <subcellularLocation>
        <location evidence="2">Synapse</location>
    </subcellularLocation>
    <subcellularLocation>
        <location evidence="2">Presynaptic active zone</location>
    </subcellularLocation>
    <subcellularLocation>
        <location evidence="2">Cytoplasmic vesicle</location>
        <location evidence="2">Secretory vesicle</location>
        <location evidence="2">Synaptic vesicle</location>
    </subcellularLocation>
    <text evidence="1">Nuclear in the absence of DNA damage. Translocated to the nucleus in response to UV- or MMS-induced DNA damage (By similarity).</text>
</comment>
<comment type="alternative products">
    <event type="alternative splicing"/>
    <isoform>
        <id>Q8TDC3-1</id>
        <name>1</name>
        <name>SADB-Long</name>
        <name>L</name>
        <sequence type="displayed"/>
    </isoform>
    <isoform>
        <id>Q8TDC3-2</id>
        <name>2</name>
        <sequence type="described" ref="VSP_008158"/>
    </isoform>
    <isoform>
        <id>Q8TDC3-3</id>
        <name>3</name>
        <name>SADB-short</name>
        <name>S</name>
        <sequence type="described" ref="VSP_041742"/>
    </isoform>
</comment>
<comment type="tissue specificity">
    <text evidence="9">Widely expressed, with highest levels in brain and testis. Protein levels remain constant throughout the cell cycle.</text>
</comment>
<comment type="PTM">
    <text evidence="8 11 12">Phosphorylated at Thr-189 by STK11/LKB1 in complex with STE20-related adapter-alpha (STRADA) pseudo kinase and CAB39. Not phosphorylated at Thr-189 by CaMKK2. In contrast, it is phosphorylated and activated by CaMKK1. May be inactivated via dephosphorylation of Thr-189 by PP2C.</text>
</comment>
<comment type="similarity">
    <text evidence="18">Belongs to the protein kinase superfamily. CAMK Ser/Thr protein kinase family. SNF1 subfamily.</text>
</comment>
<comment type="sequence caution" evidence="18">
    <conflict type="erroneous initiation">
        <sequence resource="EMBL-CDS" id="AAH16681"/>
    </conflict>
    <text>Truncated N-terminus.</text>
</comment>
<accession>Q8TDC3</accession>
<accession>F1DG44</accession>
<accession>Q5J5B5</accession>
<accession>Q8NDD0</accession>
<accession>Q8NDR4</accession>
<accession>Q8TDC2</accession>
<accession>Q96AV4</accession>
<accession>Q96JL4</accession>
<dbReference type="EC" id="2.7.11.1"/>
<dbReference type="EC" id="2.7.11.26"/>
<dbReference type="EMBL" id="AY458602">
    <property type="protein sequence ID" value="AAS10354.1"/>
    <property type="molecule type" value="mRNA"/>
</dbReference>
<dbReference type="EMBL" id="AY505124">
    <property type="protein sequence ID" value="AAS86442.1"/>
    <property type="molecule type" value="mRNA"/>
</dbReference>
<dbReference type="EMBL" id="HQ830199">
    <property type="protein sequence ID" value="ADX95745.1"/>
    <property type="molecule type" value="mRNA"/>
</dbReference>
<dbReference type="EMBL" id="AF479826">
    <property type="protein sequence ID" value="AAL87697.1"/>
    <property type="molecule type" value="mRNA"/>
</dbReference>
<dbReference type="EMBL" id="AF479827">
    <property type="protein sequence ID" value="AAL87698.1"/>
    <property type="molecule type" value="mRNA"/>
</dbReference>
<dbReference type="EMBL" id="AC008974">
    <property type="status" value="NOT_ANNOTATED_CDS"/>
    <property type="molecule type" value="Genomic_DNA"/>
</dbReference>
<dbReference type="EMBL" id="AC020922">
    <property type="status" value="NOT_ANNOTATED_CDS"/>
    <property type="molecule type" value="Genomic_DNA"/>
</dbReference>
<dbReference type="EMBL" id="AL831945">
    <property type="protein sequence ID" value="CAD38595.1"/>
    <property type="molecule type" value="mRNA"/>
</dbReference>
<dbReference type="EMBL" id="AL834275">
    <property type="protein sequence ID" value="CAD38950.2"/>
    <property type="molecule type" value="mRNA"/>
</dbReference>
<dbReference type="EMBL" id="AB058714">
    <property type="protein sequence ID" value="BAB47440.1"/>
    <property type="molecule type" value="mRNA"/>
</dbReference>
<dbReference type="EMBL" id="BC016681">
    <property type="protein sequence ID" value="AAH16681.1"/>
    <property type="status" value="ALT_INIT"/>
    <property type="molecule type" value="mRNA"/>
</dbReference>
<dbReference type="CCDS" id="CCDS12921.1">
    <molecule id="Q8TDC3-1"/>
</dbReference>
<dbReference type="RefSeq" id="NP_115806.1">
    <molecule id="Q8TDC3-1"/>
    <property type="nucleotide sequence ID" value="NM_032430.2"/>
</dbReference>
<dbReference type="SMR" id="Q8TDC3"/>
<dbReference type="BioGRID" id="124084">
    <property type="interactions" value="33"/>
</dbReference>
<dbReference type="FunCoup" id="Q8TDC3">
    <property type="interactions" value="1370"/>
</dbReference>
<dbReference type="IntAct" id="Q8TDC3">
    <property type="interactions" value="29"/>
</dbReference>
<dbReference type="MINT" id="Q8TDC3"/>
<dbReference type="STRING" id="9606.ENSP00000310649"/>
<dbReference type="BindingDB" id="Q8TDC3"/>
<dbReference type="ChEMBL" id="CHEMBL5650"/>
<dbReference type="DrugCentral" id="Q8TDC3"/>
<dbReference type="GlyGen" id="Q8TDC3">
    <property type="glycosylation" value="2 sites, 1 O-linked glycan (1 site)"/>
</dbReference>
<dbReference type="iPTMnet" id="Q8TDC3"/>
<dbReference type="PhosphoSitePlus" id="Q8TDC3"/>
<dbReference type="SwissPalm" id="Q8TDC3"/>
<dbReference type="BioMuta" id="BRSK1"/>
<dbReference type="DMDM" id="347595639"/>
<dbReference type="jPOST" id="Q8TDC3"/>
<dbReference type="MassIVE" id="Q8TDC3"/>
<dbReference type="PaxDb" id="9606-ENSP00000310649"/>
<dbReference type="PeptideAtlas" id="Q8TDC3"/>
<dbReference type="ProteomicsDB" id="74264">
    <molecule id="Q8TDC3-1"/>
</dbReference>
<dbReference type="ProteomicsDB" id="74265">
    <molecule id="Q8TDC3-2"/>
</dbReference>
<dbReference type="ProteomicsDB" id="74266">
    <molecule id="Q8TDC3-3"/>
</dbReference>
<dbReference type="Antibodypedia" id="19545">
    <property type="antibodies" value="448 antibodies from 37 providers"/>
</dbReference>
<dbReference type="DNASU" id="84446"/>
<dbReference type="Ensembl" id="ENST00000309383.6">
    <molecule id="Q8TDC3-1"/>
    <property type="protein sequence ID" value="ENSP00000310649.1"/>
    <property type="gene ID" value="ENSG00000160469.17"/>
</dbReference>
<dbReference type="Ensembl" id="ENST00000585418.1">
    <molecule id="Q8TDC3-3"/>
    <property type="protein sequence ID" value="ENSP00000467357.1"/>
    <property type="gene ID" value="ENSG00000160469.17"/>
</dbReference>
<dbReference type="Ensembl" id="ENST00000590333.5">
    <molecule id="Q8TDC3-2"/>
    <property type="protein sequence ID" value="ENSP00000468190.1"/>
    <property type="gene ID" value="ENSG00000160469.17"/>
</dbReference>
<dbReference type="GeneID" id="84446"/>
<dbReference type="KEGG" id="hsa:84446"/>
<dbReference type="MANE-Select" id="ENST00000309383.6">
    <property type="protein sequence ID" value="ENSP00000310649.1"/>
    <property type="RefSeq nucleotide sequence ID" value="NM_032430.2"/>
    <property type="RefSeq protein sequence ID" value="NP_115806.1"/>
</dbReference>
<dbReference type="UCSC" id="uc002qkf.4">
    <molecule id="Q8TDC3-1"/>
    <property type="organism name" value="human"/>
</dbReference>
<dbReference type="AGR" id="HGNC:18994"/>
<dbReference type="CTD" id="84446"/>
<dbReference type="DisGeNET" id="84446"/>
<dbReference type="GeneCards" id="BRSK1"/>
<dbReference type="HGNC" id="HGNC:18994">
    <property type="gene designation" value="BRSK1"/>
</dbReference>
<dbReference type="HPA" id="ENSG00000160469">
    <property type="expression patterns" value="Group enriched (brain, pituitary gland)"/>
</dbReference>
<dbReference type="MalaCards" id="BRSK1"/>
<dbReference type="MIM" id="609235">
    <property type="type" value="gene"/>
</dbReference>
<dbReference type="neXtProt" id="NX_Q8TDC3"/>
<dbReference type="OpenTargets" id="ENSG00000160469"/>
<dbReference type="PharmGKB" id="PA134888976"/>
<dbReference type="VEuPathDB" id="HostDB:ENSG00000160469"/>
<dbReference type="eggNOG" id="KOG0588">
    <property type="taxonomic scope" value="Eukaryota"/>
</dbReference>
<dbReference type="GeneTree" id="ENSGT00940000161254"/>
<dbReference type="HOGENOM" id="CLU_000288_156_2_1"/>
<dbReference type="InParanoid" id="Q8TDC3"/>
<dbReference type="OMA" id="QHSQRNR"/>
<dbReference type="OrthoDB" id="193931at2759"/>
<dbReference type="PAN-GO" id="Q8TDC3">
    <property type="GO annotations" value="9 GO annotations based on evolutionary models"/>
</dbReference>
<dbReference type="PhylomeDB" id="Q8TDC3"/>
<dbReference type="TreeFam" id="TF313967"/>
<dbReference type="PathwayCommons" id="Q8TDC3"/>
<dbReference type="SignaLink" id="Q8TDC3"/>
<dbReference type="SIGNOR" id="Q8TDC3"/>
<dbReference type="BioGRID-ORCS" id="84446">
    <property type="hits" value="8 hits in 1189 CRISPR screens"/>
</dbReference>
<dbReference type="CD-CODE" id="8C2F96ED">
    <property type="entry name" value="Centrosome"/>
</dbReference>
<dbReference type="CD-CODE" id="FB4E32DD">
    <property type="entry name" value="Presynaptic clusters and postsynaptic densities"/>
</dbReference>
<dbReference type="ChiTaRS" id="BRSK1">
    <property type="organism name" value="human"/>
</dbReference>
<dbReference type="GeneWiki" id="BRSK1"/>
<dbReference type="GenomeRNAi" id="84446"/>
<dbReference type="Pharos" id="Q8TDC3">
    <property type="development level" value="Tchem"/>
</dbReference>
<dbReference type="PRO" id="PR:Q8TDC3"/>
<dbReference type="Proteomes" id="UP000005640">
    <property type="component" value="Chromosome 19"/>
</dbReference>
<dbReference type="RNAct" id="Q8TDC3">
    <property type="molecule type" value="protein"/>
</dbReference>
<dbReference type="Bgee" id="ENSG00000160469">
    <property type="expression patterns" value="Expressed in right frontal lobe and 121 other cell types or tissues"/>
</dbReference>
<dbReference type="ExpressionAtlas" id="Q8TDC3">
    <property type="expression patterns" value="baseline and differential"/>
</dbReference>
<dbReference type="GO" id="GO:0030054">
    <property type="term" value="C:cell junction"/>
    <property type="evidence" value="ECO:0000314"/>
    <property type="project" value="HPA"/>
</dbReference>
<dbReference type="GO" id="GO:0005813">
    <property type="term" value="C:centrosome"/>
    <property type="evidence" value="ECO:0000250"/>
    <property type="project" value="UniProtKB"/>
</dbReference>
<dbReference type="GO" id="GO:0098981">
    <property type="term" value="C:cholinergic synapse"/>
    <property type="evidence" value="ECO:0007669"/>
    <property type="project" value="Ensembl"/>
</dbReference>
<dbReference type="GO" id="GO:0005737">
    <property type="term" value="C:cytoplasm"/>
    <property type="evidence" value="ECO:0000314"/>
    <property type="project" value="UniProtKB"/>
</dbReference>
<dbReference type="GO" id="GO:0150034">
    <property type="term" value="C:distal axon"/>
    <property type="evidence" value="ECO:0000250"/>
    <property type="project" value="ARUK-UCL"/>
</dbReference>
<dbReference type="GO" id="GO:0005654">
    <property type="term" value="C:nucleoplasm"/>
    <property type="evidence" value="ECO:0000314"/>
    <property type="project" value="HPA"/>
</dbReference>
<dbReference type="GO" id="GO:0005634">
    <property type="term" value="C:nucleus"/>
    <property type="evidence" value="ECO:0000314"/>
    <property type="project" value="UniProtKB"/>
</dbReference>
<dbReference type="GO" id="GO:0014069">
    <property type="term" value="C:postsynaptic density"/>
    <property type="evidence" value="ECO:0007669"/>
    <property type="project" value="Ensembl"/>
</dbReference>
<dbReference type="GO" id="GO:0048786">
    <property type="term" value="C:presynaptic active zone"/>
    <property type="evidence" value="ECO:0000304"/>
    <property type="project" value="ARUK-UCL"/>
</dbReference>
<dbReference type="GO" id="GO:0008021">
    <property type="term" value="C:synaptic vesicle"/>
    <property type="evidence" value="ECO:0000250"/>
    <property type="project" value="UniProtKB"/>
</dbReference>
<dbReference type="GO" id="GO:0005524">
    <property type="term" value="F:ATP binding"/>
    <property type="evidence" value="ECO:0000305"/>
    <property type="project" value="UniProtKB"/>
</dbReference>
<dbReference type="GO" id="GO:0043015">
    <property type="term" value="F:gamma-tubulin binding"/>
    <property type="evidence" value="ECO:0000250"/>
    <property type="project" value="UniProtKB"/>
</dbReference>
<dbReference type="GO" id="GO:0000287">
    <property type="term" value="F:magnesium ion binding"/>
    <property type="evidence" value="ECO:0000314"/>
    <property type="project" value="UniProtKB"/>
</dbReference>
<dbReference type="GO" id="GO:0019901">
    <property type="term" value="F:protein kinase binding"/>
    <property type="evidence" value="ECO:0007669"/>
    <property type="project" value="Ensembl"/>
</dbReference>
<dbReference type="GO" id="GO:0106310">
    <property type="term" value="F:protein serine kinase activity"/>
    <property type="evidence" value="ECO:0007669"/>
    <property type="project" value="RHEA"/>
</dbReference>
<dbReference type="GO" id="GO:0004674">
    <property type="term" value="F:protein serine/threonine kinase activity"/>
    <property type="evidence" value="ECO:0000314"/>
    <property type="project" value="UniProtKB"/>
</dbReference>
<dbReference type="GO" id="GO:0048156">
    <property type="term" value="F:tau protein binding"/>
    <property type="evidence" value="ECO:0000303"/>
    <property type="project" value="ARUK-UCL"/>
</dbReference>
<dbReference type="GO" id="GO:0050321">
    <property type="term" value="F:tau-protein kinase activity"/>
    <property type="evidence" value="ECO:0000314"/>
    <property type="project" value="UniProtKB"/>
</dbReference>
<dbReference type="GO" id="GO:0008306">
    <property type="term" value="P:associative learning"/>
    <property type="evidence" value="ECO:0000250"/>
    <property type="project" value="ARUK-UCL"/>
</dbReference>
<dbReference type="GO" id="GO:0007409">
    <property type="term" value="P:axonogenesis"/>
    <property type="evidence" value="ECO:0000250"/>
    <property type="project" value="UniProtKB"/>
</dbReference>
<dbReference type="GO" id="GO:0021953">
    <property type="term" value="P:central nervous system neuron differentiation"/>
    <property type="evidence" value="ECO:0007669"/>
    <property type="project" value="Ensembl"/>
</dbReference>
<dbReference type="GO" id="GO:0051298">
    <property type="term" value="P:centrosome duplication"/>
    <property type="evidence" value="ECO:0000250"/>
    <property type="project" value="UniProtKB"/>
</dbReference>
<dbReference type="GO" id="GO:0006974">
    <property type="term" value="P:DNA damage response"/>
    <property type="evidence" value="ECO:0000314"/>
    <property type="project" value="UniProtKB"/>
</dbReference>
<dbReference type="GO" id="GO:0030010">
    <property type="term" value="P:establishment of cell polarity"/>
    <property type="evidence" value="ECO:0000250"/>
    <property type="project" value="UniProtKB"/>
</dbReference>
<dbReference type="GO" id="GO:0000086">
    <property type="term" value="P:G2/M transition of mitotic cell cycle"/>
    <property type="evidence" value="ECO:0000314"/>
    <property type="project" value="MGI"/>
</dbReference>
<dbReference type="GO" id="GO:0090176">
    <property type="term" value="P:microtubule cytoskeleton organization involved in establishment of planar polarity"/>
    <property type="evidence" value="ECO:0000250"/>
    <property type="project" value="ARUK-UCL"/>
</dbReference>
<dbReference type="GO" id="GO:0007095">
    <property type="term" value="P:mitotic G2 DNA damage checkpoint signaling"/>
    <property type="evidence" value="ECO:0000314"/>
    <property type="project" value="UniProtKB"/>
</dbReference>
<dbReference type="GO" id="GO:0030182">
    <property type="term" value="P:neuron differentiation"/>
    <property type="evidence" value="ECO:0000250"/>
    <property type="project" value="UniProtKB"/>
</dbReference>
<dbReference type="GO" id="GO:0007269">
    <property type="term" value="P:neurotransmitter secretion"/>
    <property type="evidence" value="ECO:0000250"/>
    <property type="project" value="UniProtKB"/>
</dbReference>
<dbReference type="GO" id="GO:0018105">
    <property type="term" value="P:peptidyl-serine phosphorylation"/>
    <property type="evidence" value="ECO:0000314"/>
    <property type="project" value="MGI"/>
</dbReference>
<dbReference type="GO" id="GO:0006468">
    <property type="term" value="P:protein phosphorylation"/>
    <property type="evidence" value="ECO:0000314"/>
    <property type="project" value="UniProtKB"/>
</dbReference>
<dbReference type="GO" id="GO:0050770">
    <property type="term" value="P:regulation of axonogenesis"/>
    <property type="evidence" value="ECO:0000250"/>
    <property type="project" value="ARUK-UCL"/>
</dbReference>
<dbReference type="GO" id="GO:0010975">
    <property type="term" value="P:regulation of neuron projection development"/>
    <property type="evidence" value="ECO:0000250"/>
    <property type="project" value="ARUK-UCL"/>
</dbReference>
<dbReference type="GO" id="GO:0048167">
    <property type="term" value="P:regulation of synaptic plasticity"/>
    <property type="evidence" value="ECO:0000250"/>
    <property type="project" value="ARUK-UCL"/>
</dbReference>
<dbReference type="GO" id="GO:2000807">
    <property type="term" value="P:regulation of synaptic vesicle clustering"/>
    <property type="evidence" value="ECO:0000304"/>
    <property type="project" value="ARUK-UCL"/>
</dbReference>
<dbReference type="GO" id="GO:0010807">
    <property type="term" value="P:regulation of synaptic vesicle priming"/>
    <property type="evidence" value="ECO:0007669"/>
    <property type="project" value="Ensembl"/>
</dbReference>
<dbReference type="GO" id="GO:0009411">
    <property type="term" value="P:response to UV"/>
    <property type="evidence" value="ECO:0000314"/>
    <property type="project" value="UniProtKB"/>
</dbReference>
<dbReference type="GO" id="GO:0099504">
    <property type="term" value="P:synaptic vesicle cycle"/>
    <property type="evidence" value="ECO:0000250"/>
    <property type="project" value="ARUK-UCL"/>
</dbReference>
<dbReference type="CDD" id="cd14081">
    <property type="entry name" value="STKc_BRSK1_2"/>
    <property type="match status" value="1"/>
</dbReference>
<dbReference type="CDD" id="cd14340">
    <property type="entry name" value="UBA_BRSK"/>
    <property type="match status" value="1"/>
</dbReference>
<dbReference type="FunFam" id="1.10.510.10:FF:000064">
    <property type="entry name" value="BR serine/threonine-protein kinase 2"/>
    <property type="match status" value="1"/>
</dbReference>
<dbReference type="FunFam" id="3.30.200.20:FF:000003">
    <property type="entry name" value="Non-specific serine/threonine protein kinase"/>
    <property type="match status" value="1"/>
</dbReference>
<dbReference type="Gene3D" id="1.10.510.10">
    <property type="entry name" value="Transferase(Phosphotransferase) domain 1"/>
    <property type="match status" value="1"/>
</dbReference>
<dbReference type="InterPro" id="IPR048622">
    <property type="entry name" value="BRSK1_2-like_UBA"/>
</dbReference>
<dbReference type="InterPro" id="IPR011009">
    <property type="entry name" value="Kinase-like_dom_sf"/>
</dbReference>
<dbReference type="InterPro" id="IPR000719">
    <property type="entry name" value="Prot_kinase_dom"/>
</dbReference>
<dbReference type="InterPro" id="IPR017441">
    <property type="entry name" value="Protein_kinase_ATP_BS"/>
</dbReference>
<dbReference type="InterPro" id="IPR008271">
    <property type="entry name" value="Ser/Thr_kinase_AS"/>
</dbReference>
<dbReference type="InterPro" id="IPR015940">
    <property type="entry name" value="UBA"/>
</dbReference>
<dbReference type="PANTHER" id="PTHR24346">
    <property type="entry name" value="MAP/MICROTUBULE AFFINITY-REGULATING KINASE"/>
    <property type="match status" value="1"/>
</dbReference>
<dbReference type="PANTHER" id="PTHR24346:SF36">
    <property type="entry name" value="SERINE_THREONINE-PROTEIN KINASE BRSK1 ISOFORM X1-RELATED"/>
    <property type="match status" value="1"/>
</dbReference>
<dbReference type="Pfam" id="PF21122">
    <property type="entry name" value="KA1_BRSK"/>
    <property type="match status" value="1"/>
</dbReference>
<dbReference type="Pfam" id="PF00069">
    <property type="entry name" value="Pkinase"/>
    <property type="match status" value="1"/>
</dbReference>
<dbReference type="Pfam" id="PF21115">
    <property type="entry name" value="UBA_BRSK"/>
    <property type="match status" value="1"/>
</dbReference>
<dbReference type="SMART" id="SM00220">
    <property type="entry name" value="S_TKc"/>
    <property type="match status" value="1"/>
</dbReference>
<dbReference type="SUPFAM" id="SSF56112">
    <property type="entry name" value="Protein kinase-like (PK-like)"/>
    <property type="match status" value="1"/>
</dbReference>
<dbReference type="PROSITE" id="PS00107">
    <property type="entry name" value="PROTEIN_KINASE_ATP"/>
    <property type="match status" value="1"/>
</dbReference>
<dbReference type="PROSITE" id="PS50011">
    <property type="entry name" value="PROTEIN_KINASE_DOM"/>
    <property type="match status" value="1"/>
</dbReference>
<dbReference type="PROSITE" id="PS00108">
    <property type="entry name" value="PROTEIN_KINASE_ST"/>
    <property type="match status" value="1"/>
</dbReference>
<dbReference type="PROSITE" id="PS50030">
    <property type="entry name" value="UBA"/>
    <property type="match status" value="1"/>
</dbReference>
<keyword id="KW-0025">Alternative splicing</keyword>
<keyword id="KW-0067">ATP-binding</keyword>
<keyword id="KW-0131">Cell cycle</keyword>
<keyword id="KW-0966">Cell projection</keyword>
<keyword id="KW-0963">Cytoplasm</keyword>
<keyword id="KW-0968">Cytoplasmic vesicle</keyword>
<keyword id="KW-0206">Cytoskeleton</keyword>
<keyword id="KW-0227">DNA damage</keyword>
<keyword id="KW-0418">Kinase</keyword>
<keyword id="KW-0460">Magnesium</keyword>
<keyword id="KW-0479">Metal-binding</keyword>
<keyword id="KW-0488">Methylation</keyword>
<keyword id="KW-0524">Neurogenesis</keyword>
<keyword id="KW-0547">Nucleotide-binding</keyword>
<keyword id="KW-0539">Nucleus</keyword>
<keyword id="KW-0597">Phosphoprotein</keyword>
<keyword id="KW-1267">Proteomics identification</keyword>
<keyword id="KW-1185">Reference proteome</keyword>
<keyword id="KW-0723">Serine/threonine-protein kinase</keyword>
<keyword id="KW-0770">Synapse</keyword>
<keyword id="KW-0808">Transferase</keyword>
<reference key="1">
    <citation type="journal article" date="2004" name="EMBO J.">
        <title>LKB1 is a master kinase that activates 13 kinases of the AMPK subfamily, including MARK/PAR-1.</title>
        <authorList>
            <person name="Lizcano J.M."/>
            <person name="Goeransson O."/>
            <person name="Toth R."/>
            <person name="Deak M."/>
            <person name="Morrice N.A."/>
            <person name="Boudeau J."/>
            <person name="Hawley S.A."/>
            <person name="Udd L."/>
            <person name="Maekelae T.P."/>
            <person name="Hardie D.G."/>
            <person name="Alessi D.R."/>
        </authorList>
    </citation>
    <scope>NUCLEOTIDE SEQUENCE [MRNA] (ISOFORM 2)</scope>
    <scope>FUNCTION</scope>
    <scope>ACTIVITY REGULATION</scope>
    <scope>PHOSPHORYLATION AT THR-189</scope>
    <scope>MUTAGENESIS OF THR-189</scope>
</reference>
<reference key="2">
    <citation type="journal article" date="2004" name="J. Biol. Chem.">
        <title>Human SAD1 kinase is involved in UV-induced DNA damage checkpoint function.</title>
        <authorList>
            <person name="Lu R."/>
            <person name="Niida H."/>
            <person name="Nakanishi M."/>
        </authorList>
    </citation>
    <scope>NUCLEOTIDE SEQUENCE [MRNA] (ISOFORM 1)</scope>
    <scope>FUNCTION</scope>
    <scope>SUBCELLULAR LOCATION</scope>
    <scope>TISSUE SPECIFICITY</scope>
    <scope>MUTAGENESIS OF LYS-59</scope>
    <source>
        <tissue>Testis</tissue>
    </source>
</reference>
<reference key="3">
    <citation type="journal article" date="2006" name="Neuron">
        <title>SAD: a presynaptic kinase associated with synaptic vesicles and the active zone cytomatrix that regulates neurotransmitter release.</title>
        <authorList>
            <person name="Inoue E."/>
            <person name="Mochida S."/>
            <person name="Takagi H."/>
            <person name="Higa S."/>
            <person name="Deguchi-Tawarada M."/>
            <person name="Takao-Rikitsu E."/>
            <person name="Inoue M."/>
            <person name="Yao I."/>
            <person name="Takeuchi K."/>
            <person name="Kitajima I."/>
            <person name="Setou M."/>
            <person name="Ohtsuka T."/>
            <person name="Takai Y."/>
        </authorList>
    </citation>
    <scope>NUCLEOTIDE SEQUENCE [MRNA] (ISOFORM 1)</scope>
</reference>
<reference key="4">
    <citation type="journal article" date="2009" name="Nat. Cell Biol.">
        <title>SADB phosphorylation of gamma-tubulin regulates centrosome duplication.</title>
        <authorList>
            <person name="Alvarado-Kristensson M."/>
            <person name="Rodriguez M.J."/>
            <person name="Silio V."/>
            <person name="Valpuesta J.M."/>
            <person name="Carrera A.C."/>
        </authorList>
    </citation>
    <scope>NUCLEOTIDE SEQUENCE [MRNA] (ISOFORM 3)</scope>
</reference>
<reference key="5">
    <citation type="submission" date="2002-02" db="EMBL/GenBank/DDBJ databases">
        <authorList>
            <person name="She X.Y."/>
            <person name="Yu L."/>
            <person name="Guo J.H."/>
        </authorList>
    </citation>
    <scope>NUCLEOTIDE SEQUENCE [LARGE SCALE MRNA] (ISOFORMS 1 AND 2)</scope>
    <source>
        <tissue>Brain</tissue>
    </source>
</reference>
<reference key="6">
    <citation type="journal article" date="2004" name="Nature">
        <title>The DNA sequence and biology of human chromosome 19.</title>
        <authorList>
            <person name="Grimwood J."/>
            <person name="Gordon L.A."/>
            <person name="Olsen A.S."/>
            <person name="Terry A."/>
            <person name="Schmutz J."/>
            <person name="Lamerdin J.E."/>
            <person name="Hellsten U."/>
            <person name="Goodstein D."/>
            <person name="Couronne O."/>
            <person name="Tran-Gyamfi M."/>
            <person name="Aerts A."/>
            <person name="Altherr M."/>
            <person name="Ashworth L."/>
            <person name="Bajorek E."/>
            <person name="Black S."/>
            <person name="Branscomb E."/>
            <person name="Caenepeel S."/>
            <person name="Carrano A.V."/>
            <person name="Caoile C."/>
            <person name="Chan Y.M."/>
            <person name="Christensen M."/>
            <person name="Cleland C.A."/>
            <person name="Copeland A."/>
            <person name="Dalin E."/>
            <person name="Dehal P."/>
            <person name="Denys M."/>
            <person name="Detter J.C."/>
            <person name="Escobar J."/>
            <person name="Flowers D."/>
            <person name="Fotopulos D."/>
            <person name="Garcia C."/>
            <person name="Georgescu A.M."/>
            <person name="Glavina T."/>
            <person name="Gomez M."/>
            <person name="Gonzales E."/>
            <person name="Groza M."/>
            <person name="Hammon N."/>
            <person name="Hawkins T."/>
            <person name="Haydu L."/>
            <person name="Ho I."/>
            <person name="Huang W."/>
            <person name="Israni S."/>
            <person name="Jett J."/>
            <person name="Kadner K."/>
            <person name="Kimball H."/>
            <person name="Kobayashi A."/>
            <person name="Larionov V."/>
            <person name="Leem S.-H."/>
            <person name="Lopez F."/>
            <person name="Lou Y."/>
            <person name="Lowry S."/>
            <person name="Malfatti S."/>
            <person name="Martinez D."/>
            <person name="McCready P.M."/>
            <person name="Medina C."/>
            <person name="Morgan J."/>
            <person name="Nelson K."/>
            <person name="Nolan M."/>
            <person name="Ovcharenko I."/>
            <person name="Pitluck S."/>
            <person name="Pollard M."/>
            <person name="Popkie A.P."/>
            <person name="Predki P."/>
            <person name="Quan G."/>
            <person name="Ramirez L."/>
            <person name="Rash S."/>
            <person name="Retterer J."/>
            <person name="Rodriguez A."/>
            <person name="Rogers S."/>
            <person name="Salamov A."/>
            <person name="Salazar A."/>
            <person name="She X."/>
            <person name="Smith D."/>
            <person name="Slezak T."/>
            <person name="Solovyev V."/>
            <person name="Thayer N."/>
            <person name="Tice H."/>
            <person name="Tsai M."/>
            <person name="Ustaszewska A."/>
            <person name="Vo N."/>
            <person name="Wagner M."/>
            <person name="Wheeler J."/>
            <person name="Wu K."/>
            <person name="Xie G."/>
            <person name="Yang J."/>
            <person name="Dubchak I."/>
            <person name="Furey T.S."/>
            <person name="DeJong P."/>
            <person name="Dickson M."/>
            <person name="Gordon D."/>
            <person name="Eichler E.E."/>
            <person name="Pennacchio L.A."/>
            <person name="Richardson P."/>
            <person name="Stubbs L."/>
            <person name="Rokhsar D.S."/>
            <person name="Myers R.M."/>
            <person name="Rubin E.M."/>
            <person name="Lucas S.M."/>
        </authorList>
    </citation>
    <scope>NUCLEOTIDE SEQUENCE [LARGE SCALE GENOMIC DNA]</scope>
</reference>
<reference key="7">
    <citation type="journal article" date="2007" name="BMC Genomics">
        <title>The full-ORF clone resource of the German cDNA consortium.</title>
        <authorList>
            <person name="Bechtel S."/>
            <person name="Rosenfelder H."/>
            <person name="Duda A."/>
            <person name="Schmidt C.P."/>
            <person name="Ernst U."/>
            <person name="Wellenreuther R."/>
            <person name="Mehrle A."/>
            <person name="Schuster C."/>
            <person name="Bahr A."/>
            <person name="Bloecker H."/>
            <person name="Heubner D."/>
            <person name="Hoerlein A."/>
            <person name="Michel G."/>
            <person name="Wedler H."/>
            <person name="Koehrer K."/>
            <person name="Ottenwaelder B."/>
            <person name="Poustka A."/>
            <person name="Wiemann S."/>
            <person name="Schupp I."/>
        </authorList>
    </citation>
    <scope>NUCLEOTIDE SEQUENCE [LARGE SCALE MRNA] OF 35-778</scope>
    <source>
        <tissue>Brain</tissue>
    </source>
</reference>
<reference key="8">
    <citation type="journal article" date="2001" name="DNA Res.">
        <title>Prediction of the coding sequences of unidentified human genes. XX. The complete sequences of 100 new cDNA clones from brain which code for large proteins in vitro.</title>
        <authorList>
            <person name="Nagase T."/>
            <person name="Nakayama M."/>
            <person name="Nakajima D."/>
            <person name="Kikuno R."/>
            <person name="Ohara O."/>
        </authorList>
    </citation>
    <scope>NUCLEOTIDE SEQUENCE [LARGE SCALE MRNA] OF 64-778</scope>
    <source>
        <tissue>Brain</tissue>
    </source>
</reference>
<reference key="9">
    <citation type="journal article" date="2004" name="Genome Res.">
        <title>The status, quality, and expansion of the NIH full-length cDNA project: the Mammalian Gene Collection (MGC).</title>
        <authorList>
            <consortium name="The MGC Project Team"/>
        </authorList>
    </citation>
    <scope>NUCLEOTIDE SEQUENCE [LARGE SCALE MRNA] OF 287-778</scope>
    <source>
        <tissue>Lymph</tissue>
    </source>
</reference>
<reference key="10">
    <citation type="journal article" date="2008" name="J. Biol. Chem.">
        <title>Investigating the regulation of brain-specific kinases 1 and 2 by phosphorylation.</title>
        <authorList>
            <person name="Bright N.J."/>
            <person name="Carling D."/>
            <person name="Thornton C."/>
        </authorList>
    </citation>
    <scope>PHOSPHORYLATION AT THR-189</scope>
    <scope>MUTAGENESIS OF GLY-327</scope>
</reference>
<reference key="11">
    <citation type="journal article" date="2010" name="Biochem. J.">
        <title>Calmodulin-dependent protein kinase kinase-beta activates AMPK without forming a stable complex: synergistic effects of Ca2+ and AMP.</title>
        <authorList>
            <person name="Fogarty S."/>
            <person name="Hawley S.A."/>
            <person name="Green K.A."/>
            <person name="Saner N."/>
            <person name="Mustard K.J."/>
            <person name="Hardie D.G."/>
        </authorList>
    </citation>
    <scope>PHOSPHORYLATION</scope>
</reference>
<reference key="12">
    <citation type="journal article" date="2010" name="J. Cell Sci.">
        <title>Persistence of the cell-cycle checkpoint kinase Wee1 in SadA- and SadB-deficient neurons disrupts neuronal polarity.</title>
        <authorList>
            <person name="Muller M."/>
            <person name="Lutter D."/>
            <person name="Puschel A.W."/>
        </authorList>
    </citation>
    <scope>FUNCTION</scope>
</reference>
<reference key="13">
    <citation type="journal article" date="2012" name="J. Neurochem.">
        <title>Phosphorylation of microtubule-associated protein tau by AMPK-related kinases.</title>
        <authorList>
            <person name="Yoshida H."/>
            <person name="Goedert M."/>
        </authorList>
    </citation>
    <scope>CATALYTIC ACTIVITY</scope>
    <scope>FUNCTION IN MAPT PHOSPHORYLATION</scope>
</reference>
<reference key="14">
    <citation type="journal article" date="2013" name="J. Proteome Res.">
        <title>Toward a comprehensive characterization of a human cancer cell phosphoproteome.</title>
        <authorList>
            <person name="Zhou H."/>
            <person name="Di Palma S."/>
            <person name="Preisinger C."/>
            <person name="Peng M."/>
            <person name="Polat A.N."/>
            <person name="Heck A.J."/>
            <person name="Mohammed S."/>
        </authorList>
    </citation>
    <scope>PHOSPHORYLATION [LARGE SCALE ANALYSIS] AT SER-508</scope>
    <scope>IDENTIFICATION BY MASS SPECTROMETRY [LARGE SCALE ANALYSIS]</scope>
    <source>
        <tissue>Erythroleukemia</tissue>
    </source>
</reference>
<reference key="15">
    <citation type="journal article" date="2007" name="Nature">
        <title>Patterns of somatic mutation in human cancer genomes.</title>
        <authorList>
            <person name="Greenman C."/>
            <person name="Stephens P."/>
            <person name="Smith R."/>
            <person name="Dalgliesh G.L."/>
            <person name="Hunter C."/>
            <person name="Bignell G."/>
            <person name="Davies H."/>
            <person name="Teague J."/>
            <person name="Butler A."/>
            <person name="Stevens C."/>
            <person name="Edkins S."/>
            <person name="O'Meara S."/>
            <person name="Vastrik I."/>
            <person name="Schmidt E.E."/>
            <person name="Avis T."/>
            <person name="Barthorpe S."/>
            <person name="Bhamra G."/>
            <person name="Buck G."/>
            <person name="Choudhury B."/>
            <person name="Clements J."/>
            <person name="Cole J."/>
            <person name="Dicks E."/>
            <person name="Forbes S."/>
            <person name="Gray K."/>
            <person name="Halliday K."/>
            <person name="Harrison R."/>
            <person name="Hills K."/>
            <person name="Hinton J."/>
            <person name="Jenkinson A."/>
            <person name="Jones D."/>
            <person name="Menzies A."/>
            <person name="Mironenko T."/>
            <person name="Perry J."/>
            <person name="Raine K."/>
            <person name="Richardson D."/>
            <person name="Shepherd R."/>
            <person name="Small A."/>
            <person name="Tofts C."/>
            <person name="Varian J."/>
            <person name="Webb T."/>
            <person name="West S."/>
            <person name="Widaa S."/>
            <person name="Yates A."/>
            <person name="Cahill D.P."/>
            <person name="Louis D.N."/>
            <person name="Goldstraw P."/>
            <person name="Nicholson A.G."/>
            <person name="Brasseur F."/>
            <person name="Looijenga L."/>
            <person name="Weber B.L."/>
            <person name="Chiew Y.-E."/>
            <person name="DeFazio A."/>
            <person name="Greaves M.F."/>
            <person name="Green A.R."/>
            <person name="Campbell P."/>
            <person name="Birney E."/>
            <person name="Easton D.F."/>
            <person name="Chenevix-Trench G."/>
            <person name="Tan M.-H."/>
            <person name="Khoo S.K."/>
            <person name="Teh B.T."/>
            <person name="Yuen S.T."/>
            <person name="Leung S.Y."/>
            <person name="Wooster R."/>
            <person name="Futreal P.A."/>
            <person name="Stratton M.R."/>
        </authorList>
    </citation>
    <scope>VARIANTS [LARGE SCALE ANALYSIS] TRP-303; ILE-319; GLU-391; ASN-531; SER-749 AND ALA-764</scope>
</reference>
<protein>
    <recommendedName>
        <fullName>Serine/threonine-protein kinase BRSK1</fullName>
        <ecNumber>2.7.11.1</ecNumber>
    </recommendedName>
    <alternativeName>
        <fullName>Brain-selective kinase 1</fullName>
        <ecNumber>2.7.11.26</ecNumber>
    </alternativeName>
    <alternativeName>
        <fullName>Brain-specific serine/threonine-protein kinase 1</fullName>
        <shortName>BR serine/threonine-protein kinase 1</shortName>
    </alternativeName>
    <alternativeName>
        <fullName>Serine/threonine-protein kinase SAD-B</fullName>
    </alternativeName>
    <alternativeName>
        <fullName>Synapses of Amphids Defective homolog 1</fullName>
        <shortName>SAD1 homolog</shortName>
        <shortName>hSAD1</shortName>
    </alternativeName>
</protein>
<sequence>MSSGAKEGGGGSPAYHLPHPHPHPPQHAQYVGPYRLEKTLGKGQTGLVKLGVHCITGQKVAIKIVNREKLSESVLMKVEREIAILKLIEHPHVLKLHDVYENKKYLYLVLEHVSGGELFDYLVKKGRLTPKEARKFFRQIVSALDFCHSYSICHRDLKPENLLLDEKNNIRIADFGMASLQVGDSLLETSCGSPHYACPEVIKGEKYDGRRADMWSCGVILFALLVGALPFDDDNLRQLLEKVKRGVFHMPHFIPPDCQSLLRGMIEVEPEKRLSLEQIQKHPWYLGGKHEPDPCLEPAPGRRVAMRSLPSNGELDPDVLESMASLGCFRDRERLHRELRSEEENQEKMIYYLLLDRKERYPSCEDQDLPPRNDVDPPRKRVDSPMLSRHGKRRPERKSMEVLSITDAGGGGSPVPTRRALEMAQHSQRSRSVSGASTGLSSSPLSSPRSPVFSFSPEPGAGDEARGGGSPTSKTQTLPSRGPRGGGAGEQPPPPSARSTPLPGPPGSPRSSGGTPLHSPLHTPRASPTGTPGTTPPPSPGGGVGGAAWRSRLNSIRNSFLGSPRFHRRKMQVPTAEEMSSLTPESSPELAKRSWFGNFISLDKEEQIFLVLKDKPLSSIKADIVHAFLSIPSLSHSVLSQTSFRAEYKASGGPSVFQKPVRFQVDISSSEGPEPSPRRDGSGGGGIYSVTFTLISGPSRRFKRVVETIQAQLLSTHDQPSVQALADEKNGAQTRPAGAPPRSLQPPPGRPDPELSSSPRRGPPKDKKLLATNGTPLP</sequence>
<name>BRSK1_HUMAN</name>
<feature type="chain" id="PRO_0000085669" description="Serine/threonine-protein kinase BRSK1">
    <location>
        <begin position="1"/>
        <end position="778"/>
    </location>
</feature>
<feature type="domain" description="Protein kinase" evidence="4">
    <location>
        <begin position="34"/>
        <end position="285"/>
    </location>
</feature>
<feature type="domain" description="UBA" evidence="5">
    <location>
        <begin position="314"/>
        <end position="356"/>
    </location>
</feature>
<feature type="region of interest" description="Disordered" evidence="7">
    <location>
        <begin position="1"/>
        <end position="29"/>
    </location>
</feature>
<feature type="region of interest" description="Disordered" evidence="7">
    <location>
        <begin position="362"/>
        <end position="548"/>
    </location>
</feature>
<feature type="region of interest" description="Disordered" evidence="7">
    <location>
        <begin position="719"/>
        <end position="778"/>
    </location>
</feature>
<feature type="compositionally biased region" description="Gly residues" evidence="7">
    <location>
        <begin position="1"/>
        <end position="12"/>
    </location>
</feature>
<feature type="compositionally biased region" description="Basic and acidic residues" evidence="7">
    <location>
        <begin position="362"/>
        <end position="383"/>
    </location>
</feature>
<feature type="compositionally biased region" description="Low complexity" evidence="7">
    <location>
        <begin position="430"/>
        <end position="457"/>
    </location>
</feature>
<feature type="compositionally biased region" description="Pro residues" evidence="7">
    <location>
        <begin position="491"/>
        <end position="508"/>
    </location>
</feature>
<feature type="compositionally biased region" description="Low complexity" evidence="7">
    <location>
        <begin position="509"/>
        <end position="533"/>
    </location>
</feature>
<feature type="active site" description="Proton acceptor" evidence="4 6">
    <location>
        <position position="156"/>
    </location>
</feature>
<feature type="binding site" evidence="4">
    <location>
        <begin position="40"/>
        <end position="48"/>
    </location>
    <ligand>
        <name>ATP</name>
        <dbReference type="ChEBI" id="CHEBI:30616"/>
    </ligand>
</feature>
<feature type="binding site" evidence="4">
    <location>
        <position position="63"/>
    </location>
    <ligand>
        <name>ATP</name>
        <dbReference type="ChEBI" id="CHEBI:30616"/>
    </ligand>
</feature>
<feature type="modified residue" description="Phosphothreonine; by LKB1" evidence="8 11">
    <location>
        <position position="189"/>
    </location>
</feature>
<feature type="modified residue" description="Phosphoserine" evidence="3">
    <location>
        <position position="399"/>
    </location>
</feature>
<feature type="modified residue" description="Phosphoserine" evidence="3">
    <location>
        <position position="443"/>
    </location>
</feature>
<feature type="modified residue" description="Phosphoserine" evidence="3">
    <location>
        <position position="447"/>
    </location>
</feature>
<feature type="modified residue" description="Phosphoserine" evidence="3">
    <location>
        <position position="450"/>
    </location>
</feature>
<feature type="modified residue" description="Omega-N-methylarginine" evidence="3">
    <location>
        <position position="466"/>
    </location>
</feature>
<feature type="modified residue" description="Omega-N-methylarginine" evidence="3">
    <location>
        <position position="481"/>
    </location>
</feature>
<feature type="modified residue" description="Omega-N-methylarginine" evidence="3">
    <location>
        <position position="484"/>
    </location>
</feature>
<feature type="modified residue" description="Omega-N-methylarginine" evidence="3">
    <location>
        <position position="498"/>
    </location>
</feature>
<feature type="modified residue" description="Phosphoserine" evidence="19">
    <location>
        <position position="508"/>
    </location>
</feature>
<feature type="modified residue" description="Omega-N-methylarginine" evidence="3">
    <location>
        <position position="525"/>
    </location>
</feature>
<feature type="modified residue" description="Phosphothreonine" evidence="3">
    <location>
        <position position="529"/>
    </location>
</feature>
<feature type="modified residue" description="Phosphothreonine" evidence="3">
    <location>
        <position position="535"/>
    </location>
</feature>
<feature type="modified residue" description="Omega-N-methylarginine" evidence="3">
    <location>
        <position position="550"/>
    </location>
</feature>
<feature type="modified residue" description="Phosphothreonine" evidence="3">
    <location>
        <position position="583"/>
    </location>
</feature>
<feature type="modified residue" description="Phosphoserine" evidence="2">
    <location>
        <position position="586"/>
    </location>
</feature>
<feature type="modified residue" description="Phosphoserine" evidence="2">
    <location>
        <position position="587"/>
    </location>
</feature>
<feature type="modified residue" description="Phosphoserine" evidence="2">
    <location>
        <position position="601"/>
    </location>
</feature>
<feature type="splice variant" id="VSP_008158" description="In isoform 2." evidence="15 17">
    <original>MSSGAKEGGGGSPAYHLPHPHPHPPQ</original>
    <variation>MVAGLTLGKGPESPDGDVSVPERKDEVAGGGGEEEEAEERGR</variation>
    <location>
        <begin position="1"/>
        <end position="26"/>
    </location>
</feature>
<feature type="splice variant" id="VSP_041742" description="In isoform 3." evidence="16">
    <location>
        <begin position="344"/>
        <end position="778"/>
    </location>
</feature>
<feature type="sequence variant" id="VAR_040394" description="In a gastric adenocarcinoma sample; somatic mutation; dbSNP:rs144130246." evidence="10">
    <original>R</original>
    <variation>W</variation>
    <location>
        <position position="303"/>
    </location>
</feature>
<feature type="sequence variant" id="VAR_040395" description="In a lung large cell carcinoma sample; somatic mutation; dbSNP:rs2088591390." evidence="10">
    <original>V</original>
    <variation>I</variation>
    <location>
        <position position="319"/>
    </location>
</feature>
<feature type="sequence variant" id="VAR_040396" description="In a metastatic melanoma sample; somatic mutation." evidence="10">
    <original>G</original>
    <variation>E</variation>
    <location>
        <position position="391"/>
    </location>
</feature>
<feature type="sequence variant" id="VAR_040397" description="In dbSNP:rs55892637." evidence="10">
    <original>T</original>
    <variation>N</variation>
    <location>
        <position position="531"/>
    </location>
</feature>
<feature type="sequence variant" id="VAR_040398" description="In dbSNP:rs12978445." evidence="10">
    <original>G</original>
    <variation>S</variation>
    <location>
        <position position="749"/>
    </location>
</feature>
<feature type="sequence variant" id="VAR_040399" description="In dbSNP:rs55796422." evidence="10">
    <original>P</original>
    <variation>A</variation>
    <location>
        <position position="764"/>
    </location>
</feature>
<feature type="mutagenesis site" description="Loss of kinase activity." evidence="9">
    <original>K</original>
    <variation>A</variation>
    <location>
        <position position="59"/>
    </location>
</feature>
<feature type="mutagenesis site" description="Prevents phosphorylation and activation by STK11/LKB1 complex." evidence="8">
    <original>T</original>
    <variation>A</variation>
    <location>
        <position position="189"/>
    </location>
</feature>
<feature type="mutagenesis site" description="Abolishes activation of kinase activity." evidence="11">
    <original>G</original>
    <variation>A</variation>
    <location>
        <position position="327"/>
    </location>
</feature>
<feature type="sequence conflict" description="In Ref. 9; AAH16681." evidence="18" ref="9">
    <original>G</original>
    <variation>A</variation>
    <location>
        <position position="762"/>
    </location>
</feature>
<proteinExistence type="evidence at protein level"/>